<comment type="function">
    <text evidence="2 3">Part of the H1 type VI secretion system (H1-T6SS) specialized secretion system, which delivers several virulence factors in both prokaryotic and eukaryotic cells during infection (PubMed:21325275, PubMed:24794869). Allows the delivery of the Tse5/RhsP1 toxin to target cells where it exerts its toxicity (PubMed:24794869).</text>
</comment>
<comment type="subunit">
    <text evidence="2">Forms homomultimers (PubMed:21325275). Part of the type VI secretion system (T6SS) (PubMed:21325275).</text>
</comment>
<comment type="subcellular location">
    <subcellularLocation>
        <location evidence="2">Secreted</location>
    </subcellularLocation>
</comment>
<comment type="disruption phenotype">
    <text evidence="2 3">Deletion of vgrG1c shows residual type VI secretion (PubMed:21325275). However, simultaneous deletion of all three vgrG genes (vgrG1a, vgrG1b and vgrG1c) totally abrogates bacterial killing (PubMed:24794869).</text>
</comment>
<comment type="similarity">
    <text evidence="5">Belongs to the VgrG protein family.</text>
</comment>
<accession>Q9I0F3</accession>
<gene>
    <name evidence="4" type="primary">vgrG1c</name>
    <name type="ordered locus">PA2685</name>
</gene>
<evidence type="ECO:0000256" key="1">
    <source>
        <dbReference type="SAM" id="MobiDB-lite"/>
    </source>
</evidence>
<evidence type="ECO:0000269" key="2">
    <source>
    </source>
</evidence>
<evidence type="ECO:0000269" key="3">
    <source>
    </source>
</evidence>
<evidence type="ECO:0000303" key="4">
    <source>
    </source>
</evidence>
<evidence type="ECO:0000305" key="5"/>
<sequence length="726" mass="81652">MAIGQPFATALGCTIIWRAAGALFGPPAAGDYQGRFPMLFSQHTRLVHVDSPLGPEVLQLQRLEGREELGRLFSHELELVSSNPALPLDALLGKPMSLALELPGGSRRYFHGIVARCSQGAGAGQFASYQVTLRPWLWLLTRTSDCRIFQNQKVPDIIKQVFRDLGFSDFEDALSRSYREWEYCVQYRETSFDFVSRLMEQEGIYYWFRHEKKRHILVLSDAYGAHHSPAGYTSVPYYPPSLGHRERDHFFDWHMAREVQPGSLSLNDYDFQRPGTRLEVRSNVGRAHAAADYPLYDYPGEYVQSQDGEHYARTRIEAIQTQYERVRLRGCARGIGAGHLFHLSNYPRLDQNREYLVVGAEYRVVQELYETGNGGGGAQFESELDCIDAGQAFRPLPSTPVPVVRGPQTAVVVGPKGEEIWTDQYGRVKVHFHWDRHDQSNENSSCWMRVSQAWAGKNWGSIQIPRIGQEVIVSFLEGDPDRPIITGRVYNAEQTVPYELPANATQSGTKSRSSKGGTPANFNEIRMEDKKGAEQLFIHAERNQDIEVENDESHWVGHDRTKTIDHDETVHVKHDRTETVDNNETITVHANRSKTVDRNETVRIGMNKTETILMASLQNVGMGRMENVGLGYSLNVGMMMNTVVGLNQSTQVMKKKTLSVGDSYEVSVGGSDDGSKITLDGQSITLGSQRIELTADREILLRCGQSTIRLTPGEIEILSPNVDINC</sequence>
<proteinExistence type="evidence at protein level"/>
<organism>
    <name type="scientific">Pseudomonas aeruginosa (strain ATCC 15692 / DSM 22644 / CIP 104116 / JCM 14847 / LMG 12228 / 1C / PRS 101 / PAO1)</name>
    <dbReference type="NCBI Taxonomy" id="208964"/>
    <lineage>
        <taxon>Bacteria</taxon>
        <taxon>Pseudomonadati</taxon>
        <taxon>Pseudomonadota</taxon>
        <taxon>Gammaproteobacteria</taxon>
        <taxon>Pseudomonadales</taxon>
        <taxon>Pseudomonadaceae</taxon>
        <taxon>Pseudomonas</taxon>
    </lineage>
</organism>
<protein>
    <recommendedName>
        <fullName evidence="4">Type VI secretion system spike protein VgrG1c</fullName>
    </recommendedName>
</protein>
<feature type="chain" id="PRO_0000448913" description="Type VI secretion system spike protein VgrG1c">
    <location>
        <begin position="1"/>
        <end position="726"/>
    </location>
</feature>
<feature type="region of interest" description="Disordered" evidence="1">
    <location>
        <begin position="502"/>
        <end position="522"/>
    </location>
</feature>
<feature type="compositionally biased region" description="Low complexity" evidence="1">
    <location>
        <begin position="507"/>
        <end position="518"/>
    </location>
</feature>
<dbReference type="EMBL" id="AE004091">
    <property type="protein sequence ID" value="AAG06073.1"/>
    <property type="molecule type" value="Genomic_DNA"/>
</dbReference>
<dbReference type="PIR" id="G83310">
    <property type="entry name" value="G83310"/>
</dbReference>
<dbReference type="RefSeq" id="NP_251375.1">
    <property type="nucleotide sequence ID" value="NC_002516.2"/>
</dbReference>
<dbReference type="RefSeq" id="WP_003143801.1">
    <property type="nucleotide sequence ID" value="NC_002516.2"/>
</dbReference>
<dbReference type="SMR" id="Q9I0F3"/>
<dbReference type="STRING" id="208964.PA2685"/>
<dbReference type="PaxDb" id="208964-PA2685"/>
<dbReference type="GeneID" id="879130"/>
<dbReference type="KEGG" id="pae:PA2685"/>
<dbReference type="PATRIC" id="fig|208964.12.peg.2809"/>
<dbReference type="PseudoCAP" id="PA2685"/>
<dbReference type="HOGENOM" id="CLU_004121_3_0_6"/>
<dbReference type="InParanoid" id="Q9I0F3"/>
<dbReference type="OrthoDB" id="9762420at2"/>
<dbReference type="PhylomeDB" id="Q9I0F3"/>
<dbReference type="BioCyc" id="PAER208964:G1FZ6-2725-MONOMER"/>
<dbReference type="Proteomes" id="UP000002438">
    <property type="component" value="Chromosome"/>
</dbReference>
<dbReference type="GO" id="GO:0005576">
    <property type="term" value="C:extracellular region"/>
    <property type="evidence" value="ECO:0007669"/>
    <property type="project" value="UniProtKB-SubCell"/>
</dbReference>
<dbReference type="GO" id="GO:0033104">
    <property type="term" value="C:type VI protein secretion system complex"/>
    <property type="evidence" value="ECO:0000314"/>
    <property type="project" value="PseudoCAP"/>
</dbReference>
<dbReference type="GO" id="GO:0033103">
    <property type="term" value="P:protein secretion by the type VI secretion system"/>
    <property type="evidence" value="ECO:0000314"/>
    <property type="project" value="PseudoCAP"/>
</dbReference>
<dbReference type="FunFam" id="3.55.50.10:FF:000001">
    <property type="entry name" value="Actin cross-linking toxin VgrG1"/>
    <property type="match status" value="1"/>
</dbReference>
<dbReference type="FunFam" id="2.40.50.230:FF:000001">
    <property type="entry name" value="Type VI secretion protein VgrG"/>
    <property type="match status" value="1"/>
</dbReference>
<dbReference type="FunFam" id="4.10.220.110:FF:000001">
    <property type="entry name" value="VgrG1"/>
    <property type="match status" value="1"/>
</dbReference>
<dbReference type="Gene3D" id="2.30.110.50">
    <property type="match status" value="1"/>
</dbReference>
<dbReference type="Gene3D" id="4.10.220.110">
    <property type="match status" value="1"/>
</dbReference>
<dbReference type="Gene3D" id="3.55.50.10">
    <property type="entry name" value="Baseplate protein-like domains"/>
    <property type="match status" value="1"/>
</dbReference>
<dbReference type="Gene3D" id="2.40.50.230">
    <property type="entry name" value="Gp5 N-terminal domain"/>
    <property type="match status" value="1"/>
</dbReference>
<dbReference type="InterPro" id="IPR006531">
    <property type="entry name" value="Gp5/Vgr_OB"/>
</dbReference>
<dbReference type="InterPro" id="IPR054030">
    <property type="entry name" value="Gp5_Vgr_C"/>
</dbReference>
<dbReference type="InterPro" id="IPR017847">
    <property type="entry name" value="T6SS_RhsGE_Vgr_subset"/>
</dbReference>
<dbReference type="InterPro" id="IPR006533">
    <property type="entry name" value="T6SS_Vgr_RhsGE"/>
</dbReference>
<dbReference type="InterPro" id="IPR050708">
    <property type="entry name" value="T6SS_VgrG/RHS"/>
</dbReference>
<dbReference type="InterPro" id="IPR037026">
    <property type="entry name" value="Vgr_OB-fold_dom_sf"/>
</dbReference>
<dbReference type="NCBIfam" id="TIGR01646">
    <property type="entry name" value="vgr_GE"/>
    <property type="match status" value="1"/>
</dbReference>
<dbReference type="NCBIfam" id="TIGR03361">
    <property type="entry name" value="VI_Rhs_Vgr"/>
    <property type="match status" value="1"/>
</dbReference>
<dbReference type="PANTHER" id="PTHR32305">
    <property type="match status" value="1"/>
</dbReference>
<dbReference type="PANTHER" id="PTHR32305:SF15">
    <property type="entry name" value="PROTEIN RHSA-RELATED"/>
    <property type="match status" value="1"/>
</dbReference>
<dbReference type="Pfam" id="PF22178">
    <property type="entry name" value="Gp5_trimer_C"/>
    <property type="match status" value="1"/>
</dbReference>
<dbReference type="Pfam" id="PF04717">
    <property type="entry name" value="Phage_base_V"/>
    <property type="match status" value="1"/>
</dbReference>
<dbReference type="Pfam" id="PF05954">
    <property type="entry name" value="Phage_GPD"/>
    <property type="match status" value="1"/>
</dbReference>
<dbReference type="SUPFAM" id="SSF69255">
    <property type="entry name" value="gp5 N-terminal domain-like"/>
    <property type="match status" value="1"/>
</dbReference>
<dbReference type="SUPFAM" id="SSF69349">
    <property type="entry name" value="Phage fibre proteins"/>
    <property type="match status" value="1"/>
</dbReference>
<dbReference type="SUPFAM" id="SSF69279">
    <property type="entry name" value="Phage tail proteins"/>
    <property type="match status" value="2"/>
</dbReference>
<name>VGR1C_PSEAE</name>
<keyword id="KW-1185">Reference proteome</keyword>
<keyword id="KW-0964">Secreted</keyword>
<reference key="1">
    <citation type="journal article" date="2000" name="Nature">
        <title>Complete genome sequence of Pseudomonas aeruginosa PAO1, an opportunistic pathogen.</title>
        <authorList>
            <person name="Stover C.K."/>
            <person name="Pham X.-Q.T."/>
            <person name="Erwin A.L."/>
            <person name="Mizoguchi S.D."/>
            <person name="Warrener P."/>
            <person name="Hickey M.J."/>
            <person name="Brinkman F.S.L."/>
            <person name="Hufnagle W.O."/>
            <person name="Kowalik D.J."/>
            <person name="Lagrou M."/>
            <person name="Garber R.L."/>
            <person name="Goltry L."/>
            <person name="Tolentino E."/>
            <person name="Westbrock-Wadman S."/>
            <person name="Yuan Y."/>
            <person name="Brody L.L."/>
            <person name="Coulter S.N."/>
            <person name="Folger K.R."/>
            <person name="Kas A."/>
            <person name="Larbig K."/>
            <person name="Lim R.M."/>
            <person name="Smith K.A."/>
            <person name="Spencer D.H."/>
            <person name="Wong G.K.-S."/>
            <person name="Wu Z."/>
            <person name="Paulsen I.T."/>
            <person name="Reizer J."/>
            <person name="Saier M.H. Jr."/>
            <person name="Hancock R.E.W."/>
            <person name="Lory S."/>
            <person name="Olson M.V."/>
        </authorList>
    </citation>
    <scope>NUCLEOTIDE SEQUENCE [LARGE SCALE GENOMIC DNA]</scope>
    <source>
        <strain>ATCC 15692 / DSM 22644 / CIP 104116 / JCM 14847 / LMG 12228 / 1C / PRS 101 / PAO1</strain>
    </source>
</reference>
<reference key="2">
    <citation type="journal article" date="2011" name="J. Biol. Chem.">
        <title>Type VI secretion system in Pseudomonas aeruginosa: secretion and multimerization of VgrG proteins.</title>
        <authorList>
            <person name="Hachani A."/>
            <person name="Lossi N.S."/>
            <person name="Hamilton A."/>
            <person name="Jones C."/>
            <person name="Bleves S."/>
            <person name="Albesa-Jove D."/>
            <person name="Filloux A."/>
        </authorList>
    </citation>
    <scope>SUBCELLULAR LOCATION</scope>
    <scope>SUBUNIT</scope>
    <scope>FUNCTION</scope>
    <scope>DISRUPTION PHENOTYPE</scope>
    <source>
        <strain>ATCC 15692 / DSM 22644 / CIP 104116 / JCM 14847 / LMG 12228 / 1C / PRS 101 / PAO1</strain>
    </source>
</reference>
<reference key="3">
    <citation type="journal article" date="2014" name="J. Biol. Chem.">
        <title>The VgrG proteins are 'a la carte' delivery systems for bacterial type VI effectors.</title>
        <authorList>
            <person name="Hachani A."/>
            <person name="Allsopp L.P."/>
            <person name="Oduko Y."/>
            <person name="Filloux A."/>
        </authorList>
    </citation>
    <scope>FUNCTION</scope>
    <scope>DISRUPTION PHENOTYPE</scope>
    <source>
        <strain>PAK</strain>
    </source>
</reference>